<accession>C1F8M1</accession>
<sequence length="806" mass="86919">MKQDVTVELTGGKKLHFETGRMAKQASGAALVTQGESVVLATAVAAPDPKEGIDFFPLTVDYREYAYAGGRIPGGFIKREGRPSEREILTSRQIDRPIRPLFPEGFRNETQVIALVFSADKENDPDIVGINAASAALALSDIPFAGPVGAVRVGYVNGEYVINPSYAERRDSSINITVVGTMDGIVMIESGSAEVPEEVVLGAIDFGHTEIKKIVAAINELAAKAGKTKRAVTAPEFDEAYFETLKNKIGARLADALDTKAHPKTESYALVKQIKDELAAEIPADENAGAAKKKLAHYYELLREKIFREQVTKDRVRPDRRGFDEIRQITIEVGVLPRTHGSALFTRGETQALVTATLGTNDDSQRLETFEGEQKKRFMLHYNFPPFSVGEVGRMTGVGRREVGHGALAERAISAVLPGEDESPYALRVVSDILESNGSSSMASVCGASLALMDAGIPLKGAVAGVAMGLVKEGDEYAILTDIAGAEDHYGDMDFKVAGTRKGITALQMDIKISGITGQIMREAMEQARRGRMFLLDKMDEILAAPREEKSKHAPQIRTVQIPTDKIRDLIGPGGKTIRGIIEATQVKIDVDDTGRVNIASSDEEGLKKALAMINDLTAVPEVGKTYLGKVVRLAEFGAFVEIFPGTDGLLHISEIAEHRVKEVKDELHEGDQVMVKVLGVEGNRIKLSRKAVIREQRQKLGLPEPGAEAPAAAEGQPRAERAERQPSSNASTITIEGGEDFDDFDEEGGEGEGEDENFNREDTPNSAPGERRPGGAGAAGNRGRRRRRGRGRGPGQGGGGNRGPQ</sequence>
<dbReference type="EC" id="2.7.7.8" evidence="1"/>
<dbReference type="EMBL" id="CP001472">
    <property type="protein sequence ID" value="ACO32008.1"/>
    <property type="molecule type" value="Genomic_DNA"/>
</dbReference>
<dbReference type="RefSeq" id="WP_012680553.1">
    <property type="nucleotide sequence ID" value="NC_012483.1"/>
</dbReference>
<dbReference type="SMR" id="C1F8M1"/>
<dbReference type="FunCoup" id="C1F8M1">
    <property type="interactions" value="528"/>
</dbReference>
<dbReference type="STRING" id="240015.ACP_0149"/>
<dbReference type="KEGG" id="aca:ACP_0149"/>
<dbReference type="eggNOG" id="COG1185">
    <property type="taxonomic scope" value="Bacteria"/>
</dbReference>
<dbReference type="HOGENOM" id="CLU_004217_2_2_0"/>
<dbReference type="InParanoid" id="C1F8M1"/>
<dbReference type="OrthoDB" id="9804305at2"/>
<dbReference type="Proteomes" id="UP000002207">
    <property type="component" value="Chromosome"/>
</dbReference>
<dbReference type="GO" id="GO:0005829">
    <property type="term" value="C:cytosol"/>
    <property type="evidence" value="ECO:0007669"/>
    <property type="project" value="TreeGrafter"/>
</dbReference>
<dbReference type="GO" id="GO:0000175">
    <property type="term" value="F:3'-5'-RNA exonuclease activity"/>
    <property type="evidence" value="ECO:0007669"/>
    <property type="project" value="TreeGrafter"/>
</dbReference>
<dbReference type="GO" id="GO:0000287">
    <property type="term" value="F:magnesium ion binding"/>
    <property type="evidence" value="ECO:0007669"/>
    <property type="project" value="UniProtKB-UniRule"/>
</dbReference>
<dbReference type="GO" id="GO:0004654">
    <property type="term" value="F:polyribonucleotide nucleotidyltransferase activity"/>
    <property type="evidence" value="ECO:0007669"/>
    <property type="project" value="UniProtKB-UniRule"/>
</dbReference>
<dbReference type="GO" id="GO:0003723">
    <property type="term" value="F:RNA binding"/>
    <property type="evidence" value="ECO:0007669"/>
    <property type="project" value="UniProtKB-UniRule"/>
</dbReference>
<dbReference type="GO" id="GO:0006402">
    <property type="term" value="P:mRNA catabolic process"/>
    <property type="evidence" value="ECO:0007669"/>
    <property type="project" value="UniProtKB-UniRule"/>
</dbReference>
<dbReference type="GO" id="GO:0006396">
    <property type="term" value="P:RNA processing"/>
    <property type="evidence" value="ECO:0007669"/>
    <property type="project" value="InterPro"/>
</dbReference>
<dbReference type="CDD" id="cd02393">
    <property type="entry name" value="KH-I_PNPase"/>
    <property type="match status" value="1"/>
</dbReference>
<dbReference type="CDD" id="cd11363">
    <property type="entry name" value="RNase_PH_PNPase_1"/>
    <property type="match status" value="1"/>
</dbReference>
<dbReference type="CDD" id="cd11364">
    <property type="entry name" value="RNase_PH_PNPase_2"/>
    <property type="match status" value="1"/>
</dbReference>
<dbReference type="CDD" id="cd04472">
    <property type="entry name" value="S1_PNPase"/>
    <property type="match status" value="1"/>
</dbReference>
<dbReference type="FunFam" id="3.30.1370.10:FF:000001">
    <property type="entry name" value="Polyribonucleotide nucleotidyltransferase"/>
    <property type="match status" value="1"/>
</dbReference>
<dbReference type="FunFam" id="3.30.230.70:FF:000001">
    <property type="entry name" value="Polyribonucleotide nucleotidyltransferase"/>
    <property type="match status" value="1"/>
</dbReference>
<dbReference type="FunFam" id="3.30.230.70:FF:000002">
    <property type="entry name" value="Polyribonucleotide nucleotidyltransferase"/>
    <property type="match status" value="1"/>
</dbReference>
<dbReference type="Gene3D" id="3.30.230.70">
    <property type="entry name" value="GHMP Kinase, N-terminal domain"/>
    <property type="match status" value="2"/>
</dbReference>
<dbReference type="Gene3D" id="3.30.1370.10">
    <property type="entry name" value="K Homology domain, type 1"/>
    <property type="match status" value="1"/>
</dbReference>
<dbReference type="Gene3D" id="2.40.50.140">
    <property type="entry name" value="Nucleic acid-binding proteins"/>
    <property type="match status" value="1"/>
</dbReference>
<dbReference type="HAMAP" id="MF_01595">
    <property type="entry name" value="PNPase"/>
    <property type="match status" value="1"/>
</dbReference>
<dbReference type="InterPro" id="IPR001247">
    <property type="entry name" value="ExoRNase_PH_dom1"/>
</dbReference>
<dbReference type="InterPro" id="IPR015847">
    <property type="entry name" value="ExoRNase_PH_dom2"/>
</dbReference>
<dbReference type="InterPro" id="IPR036345">
    <property type="entry name" value="ExoRNase_PH_dom2_sf"/>
</dbReference>
<dbReference type="InterPro" id="IPR004087">
    <property type="entry name" value="KH_dom"/>
</dbReference>
<dbReference type="InterPro" id="IPR004088">
    <property type="entry name" value="KH_dom_type_1"/>
</dbReference>
<dbReference type="InterPro" id="IPR036612">
    <property type="entry name" value="KH_dom_type_1_sf"/>
</dbReference>
<dbReference type="InterPro" id="IPR012340">
    <property type="entry name" value="NA-bd_OB-fold"/>
</dbReference>
<dbReference type="InterPro" id="IPR012162">
    <property type="entry name" value="PNPase"/>
</dbReference>
<dbReference type="InterPro" id="IPR027408">
    <property type="entry name" value="PNPase/RNase_PH_dom_sf"/>
</dbReference>
<dbReference type="InterPro" id="IPR015848">
    <property type="entry name" value="PNPase_PH_RNA-bd_bac/org-type"/>
</dbReference>
<dbReference type="InterPro" id="IPR036456">
    <property type="entry name" value="PNPase_PH_RNA-bd_sf"/>
</dbReference>
<dbReference type="InterPro" id="IPR020568">
    <property type="entry name" value="Ribosomal_Su5_D2-typ_SF"/>
</dbReference>
<dbReference type="InterPro" id="IPR003029">
    <property type="entry name" value="S1_domain"/>
</dbReference>
<dbReference type="NCBIfam" id="TIGR03591">
    <property type="entry name" value="polynuc_phos"/>
    <property type="match status" value="1"/>
</dbReference>
<dbReference type="NCBIfam" id="NF008805">
    <property type="entry name" value="PRK11824.1"/>
    <property type="match status" value="1"/>
</dbReference>
<dbReference type="PANTHER" id="PTHR11252">
    <property type="entry name" value="POLYRIBONUCLEOTIDE NUCLEOTIDYLTRANSFERASE"/>
    <property type="match status" value="1"/>
</dbReference>
<dbReference type="PANTHER" id="PTHR11252:SF0">
    <property type="entry name" value="POLYRIBONUCLEOTIDE NUCLEOTIDYLTRANSFERASE 1, MITOCHONDRIAL"/>
    <property type="match status" value="1"/>
</dbReference>
<dbReference type="Pfam" id="PF00013">
    <property type="entry name" value="KH_1"/>
    <property type="match status" value="1"/>
</dbReference>
<dbReference type="Pfam" id="PF03726">
    <property type="entry name" value="PNPase"/>
    <property type="match status" value="1"/>
</dbReference>
<dbReference type="Pfam" id="PF01138">
    <property type="entry name" value="RNase_PH"/>
    <property type="match status" value="2"/>
</dbReference>
<dbReference type="Pfam" id="PF03725">
    <property type="entry name" value="RNase_PH_C"/>
    <property type="match status" value="2"/>
</dbReference>
<dbReference type="Pfam" id="PF00575">
    <property type="entry name" value="S1"/>
    <property type="match status" value="1"/>
</dbReference>
<dbReference type="PIRSF" id="PIRSF005499">
    <property type="entry name" value="PNPase"/>
    <property type="match status" value="1"/>
</dbReference>
<dbReference type="SMART" id="SM00322">
    <property type="entry name" value="KH"/>
    <property type="match status" value="1"/>
</dbReference>
<dbReference type="SMART" id="SM00316">
    <property type="entry name" value="S1"/>
    <property type="match status" value="1"/>
</dbReference>
<dbReference type="SUPFAM" id="SSF54791">
    <property type="entry name" value="Eukaryotic type KH-domain (KH-domain type I)"/>
    <property type="match status" value="1"/>
</dbReference>
<dbReference type="SUPFAM" id="SSF50249">
    <property type="entry name" value="Nucleic acid-binding proteins"/>
    <property type="match status" value="1"/>
</dbReference>
<dbReference type="SUPFAM" id="SSF46915">
    <property type="entry name" value="Polynucleotide phosphorylase/guanosine pentaphosphate synthase (PNPase/GPSI), domain 3"/>
    <property type="match status" value="1"/>
</dbReference>
<dbReference type="SUPFAM" id="SSF55666">
    <property type="entry name" value="Ribonuclease PH domain 2-like"/>
    <property type="match status" value="2"/>
</dbReference>
<dbReference type="SUPFAM" id="SSF54211">
    <property type="entry name" value="Ribosomal protein S5 domain 2-like"/>
    <property type="match status" value="2"/>
</dbReference>
<dbReference type="PROSITE" id="PS50084">
    <property type="entry name" value="KH_TYPE_1"/>
    <property type="match status" value="1"/>
</dbReference>
<dbReference type="PROSITE" id="PS50126">
    <property type="entry name" value="S1"/>
    <property type="match status" value="1"/>
</dbReference>
<feature type="chain" id="PRO_1000185714" description="Polyribonucleotide nucleotidyltransferase">
    <location>
        <begin position="1"/>
        <end position="806"/>
    </location>
</feature>
<feature type="domain" description="KH" evidence="1">
    <location>
        <begin position="555"/>
        <end position="614"/>
    </location>
</feature>
<feature type="domain" description="S1 motif" evidence="1">
    <location>
        <begin position="624"/>
        <end position="691"/>
    </location>
</feature>
<feature type="region of interest" description="Disordered" evidence="2">
    <location>
        <begin position="698"/>
        <end position="806"/>
    </location>
</feature>
<feature type="compositionally biased region" description="Low complexity" evidence="2">
    <location>
        <begin position="704"/>
        <end position="717"/>
    </location>
</feature>
<feature type="compositionally biased region" description="Acidic residues" evidence="2">
    <location>
        <begin position="738"/>
        <end position="757"/>
    </location>
</feature>
<feature type="compositionally biased region" description="Basic and acidic residues" evidence="2">
    <location>
        <begin position="758"/>
        <end position="774"/>
    </location>
</feature>
<feature type="compositionally biased region" description="Basic residues" evidence="2">
    <location>
        <begin position="783"/>
        <end position="792"/>
    </location>
</feature>
<feature type="compositionally biased region" description="Gly residues" evidence="2">
    <location>
        <begin position="793"/>
        <end position="806"/>
    </location>
</feature>
<feature type="binding site" evidence="1">
    <location>
        <position position="488"/>
    </location>
    <ligand>
        <name>Mg(2+)</name>
        <dbReference type="ChEBI" id="CHEBI:18420"/>
    </ligand>
</feature>
<feature type="binding site" evidence="1">
    <location>
        <position position="494"/>
    </location>
    <ligand>
        <name>Mg(2+)</name>
        <dbReference type="ChEBI" id="CHEBI:18420"/>
    </ligand>
</feature>
<reference key="1">
    <citation type="journal article" date="2009" name="Appl. Environ. Microbiol.">
        <title>Three genomes from the phylum Acidobacteria provide insight into the lifestyles of these microorganisms in soils.</title>
        <authorList>
            <person name="Ward N.L."/>
            <person name="Challacombe J.F."/>
            <person name="Janssen P.H."/>
            <person name="Henrissat B."/>
            <person name="Coutinho P.M."/>
            <person name="Wu M."/>
            <person name="Xie G."/>
            <person name="Haft D.H."/>
            <person name="Sait M."/>
            <person name="Badger J."/>
            <person name="Barabote R.D."/>
            <person name="Bradley B."/>
            <person name="Brettin T.S."/>
            <person name="Brinkac L.M."/>
            <person name="Bruce D."/>
            <person name="Creasy T."/>
            <person name="Daugherty S.C."/>
            <person name="Davidsen T.M."/>
            <person name="DeBoy R.T."/>
            <person name="Detter J.C."/>
            <person name="Dodson R.J."/>
            <person name="Durkin A.S."/>
            <person name="Ganapathy A."/>
            <person name="Gwinn-Giglio M."/>
            <person name="Han C.S."/>
            <person name="Khouri H."/>
            <person name="Kiss H."/>
            <person name="Kothari S.P."/>
            <person name="Madupu R."/>
            <person name="Nelson K.E."/>
            <person name="Nelson W.C."/>
            <person name="Paulsen I."/>
            <person name="Penn K."/>
            <person name="Ren Q."/>
            <person name="Rosovitz M.J."/>
            <person name="Selengut J.D."/>
            <person name="Shrivastava S."/>
            <person name="Sullivan S.A."/>
            <person name="Tapia R."/>
            <person name="Thompson L.S."/>
            <person name="Watkins K.L."/>
            <person name="Yang Q."/>
            <person name="Yu C."/>
            <person name="Zafar N."/>
            <person name="Zhou L."/>
            <person name="Kuske C.R."/>
        </authorList>
    </citation>
    <scope>NUCLEOTIDE SEQUENCE [LARGE SCALE GENOMIC DNA]</scope>
    <source>
        <strain>ATCC 51196 / DSM 11244 / BCRC 80197 / JCM 7670 / NBRC 15755 / NCIMB 13165 / 161</strain>
    </source>
</reference>
<evidence type="ECO:0000255" key="1">
    <source>
        <dbReference type="HAMAP-Rule" id="MF_01595"/>
    </source>
</evidence>
<evidence type="ECO:0000256" key="2">
    <source>
        <dbReference type="SAM" id="MobiDB-lite"/>
    </source>
</evidence>
<gene>
    <name evidence="1" type="primary">pnp</name>
    <name type="ordered locus">ACP_0149</name>
</gene>
<comment type="function">
    <text evidence="1">Involved in mRNA degradation. Catalyzes the phosphorolysis of single-stranded polyribonucleotides processively in the 3'- to 5'-direction.</text>
</comment>
<comment type="catalytic activity">
    <reaction evidence="1">
        <text>RNA(n+1) + phosphate = RNA(n) + a ribonucleoside 5'-diphosphate</text>
        <dbReference type="Rhea" id="RHEA:22096"/>
        <dbReference type="Rhea" id="RHEA-COMP:14527"/>
        <dbReference type="Rhea" id="RHEA-COMP:17342"/>
        <dbReference type="ChEBI" id="CHEBI:43474"/>
        <dbReference type="ChEBI" id="CHEBI:57930"/>
        <dbReference type="ChEBI" id="CHEBI:140395"/>
        <dbReference type="EC" id="2.7.7.8"/>
    </reaction>
</comment>
<comment type="cofactor">
    <cofactor evidence="1">
        <name>Mg(2+)</name>
        <dbReference type="ChEBI" id="CHEBI:18420"/>
    </cofactor>
</comment>
<comment type="subcellular location">
    <subcellularLocation>
        <location evidence="1">Cytoplasm</location>
    </subcellularLocation>
</comment>
<comment type="similarity">
    <text evidence="1">Belongs to the polyribonucleotide nucleotidyltransferase family.</text>
</comment>
<keyword id="KW-0963">Cytoplasm</keyword>
<keyword id="KW-0460">Magnesium</keyword>
<keyword id="KW-0479">Metal-binding</keyword>
<keyword id="KW-0548">Nucleotidyltransferase</keyword>
<keyword id="KW-1185">Reference proteome</keyword>
<keyword id="KW-0694">RNA-binding</keyword>
<keyword id="KW-0808">Transferase</keyword>
<organism>
    <name type="scientific">Acidobacterium capsulatum (strain ATCC 51196 / DSM 11244 / BCRC 80197 / JCM 7670 / NBRC 15755 / NCIMB 13165 / 161)</name>
    <dbReference type="NCBI Taxonomy" id="240015"/>
    <lineage>
        <taxon>Bacteria</taxon>
        <taxon>Pseudomonadati</taxon>
        <taxon>Acidobacteriota</taxon>
        <taxon>Terriglobia</taxon>
        <taxon>Terriglobales</taxon>
        <taxon>Acidobacteriaceae</taxon>
        <taxon>Acidobacterium</taxon>
    </lineage>
</organism>
<protein>
    <recommendedName>
        <fullName evidence="1">Polyribonucleotide nucleotidyltransferase</fullName>
        <ecNumber evidence="1">2.7.7.8</ecNumber>
    </recommendedName>
    <alternativeName>
        <fullName evidence="1">Polynucleotide phosphorylase</fullName>
        <shortName evidence="1">PNPase</shortName>
    </alternativeName>
</protein>
<proteinExistence type="inferred from homology"/>
<name>PNP_ACIC5</name>